<sequence length="618" mass="71087">MNPIRSVKEEFCEIVANGLGISKDVIFKTLEYPPREELGDISLPLPSLKLNVRTEVTFSHGKLIKEVRKTGIYVNAFVDEKELFKLLFTEMQDDYGVEKTENPKRIVVEHTSANPIHPLHIGHLRNSILGDTISRMLKIRGHDVNRRFYVNDAGRQVAILTLGYILLGEPEPSPKVDHWFGLIYSITNVIIEIRELKEELKKDLDPDTYKDKINRLDELVATAQSLRERNPEFFDKLADAINSIPDVESEIQKIIKSYEKGDDPKIKQIVRKIVNLNLDGFRESLDKLEISFDVYDYESELLWSGMVDEILSKAFQIAKDYKGTKALELEDINEKIKEILNIPKGLKLPPLVLTRSDGTSLYTTRDIAYTVKKFSDFKADTVINVIAEQQSIPQMQLRASLYLLGYERLAQNLVHYSYGMVNLQGMRMSGRLGRFISLDDVIEKVSEVAKKKIEEKSGDITNLRDIVNSAIRYAILSVASNKPVTFNINNIVDFEQNSGPYLQYTYARAYNILAKNQDEIKLTDADLSDLIGDKRRLLLLIARFPETFNKAIDELRPEDLIDFLRRTADVFNRWYNFERVLQEPDYRKRITRLFIVKGIERVLYNGLNALGIKPLSKM</sequence>
<reference key="1">
    <citation type="journal article" date="2005" name="J. Bacteriol.">
        <title>The genome of Sulfolobus acidocaldarius, a model organism of the Crenarchaeota.</title>
        <authorList>
            <person name="Chen L."/>
            <person name="Bruegger K."/>
            <person name="Skovgaard M."/>
            <person name="Redder P."/>
            <person name="She Q."/>
            <person name="Torarinsson E."/>
            <person name="Greve B."/>
            <person name="Awayez M."/>
            <person name="Zibat A."/>
            <person name="Klenk H.-P."/>
            <person name="Garrett R.A."/>
        </authorList>
    </citation>
    <scope>NUCLEOTIDE SEQUENCE [LARGE SCALE GENOMIC DNA]</scope>
    <source>
        <strain>ATCC 33909 / DSM 639 / JCM 8929 / NBRC 15157 / NCIMB 11770</strain>
    </source>
</reference>
<feature type="chain" id="PRO_0000151655" description="Arginine--tRNA ligase">
    <location>
        <begin position="1"/>
        <end position="618"/>
    </location>
</feature>
<feature type="short sequence motif" description="'HIGH' region">
    <location>
        <begin position="113"/>
        <end position="123"/>
    </location>
</feature>
<keyword id="KW-0030">Aminoacyl-tRNA synthetase</keyword>
<keyword id="KW-0067">ATP-binding</keyword>
<keyword id="KW-0963">Cytoplasm</keyword>
<keyword id="KW-0436">Ligase</keyword>
<keyword id="KW-0547">Nucleotide-binding</keyword>
<keyword id="KW-0648">Protein biosynthesis</keyword>
<keyword id="KW-1185">Reference proteome</keyword>
<accession>Q4J904</accession>
<organism>
    <name type="scientific">Sulfolobus acidocaldarius (strain ATCC 33909 / DSM 639 / JCM 8929 / NBRC 15157 / NCIMB 11770)</name>
    <dbReference type="NCBI Taxonomy" id="330779"/>
    <lineage>
        <taxon>Archaea</taxon>
        <taxon>Thermoproteota</taxon>
        <taxon>Thermoprotei</taxon>
        <taxon>Sulfolobales</taxon>
        <taxon>Sulfolobaceae</taxon>
        <taxon>Sulfolobus</taxon>
    </lineage>
</organism>
<comment type="catalytic activity">
    <reaction evidence="1">
        <text>tRNA(Arg) + L-arginine + ATP = L-arginyl-tRNA(Arg) + AMP + diphosphate</text>
        <dbReference type="Rhea" id="RHEA:20301"/>
        <dbReference type="Rhea" id="RHEA-COMP:9658"/>
        <dbReference type="Rhea" id="RHEA-COMP:9673"/>
        <dbReference type="ChEBI" id="CHEBI:30616"/>
        <dbReference type="ChEBI" id="CHEBI:32682"/>
        <dbReference type="ChEBI" id="CHEBI:33019"/>
        <dbReference type="ChEBI" id="CHEBI:78442"/>
        <dbReference type="ChEBI" id="CHEBI:78513"/>
        <dbReference type="ChEBI" id="CHEBI:456215"/>
        <dbReference type="EC" id="6.1.1.19"/>
    </reaction>
</comment>
<comment type="subcellular location">
    <subcellularLocation>
        <location evidence="1">Cytoplasm</location>
    </subcellularLocation>
</comment>
<comment type="similarity">
    <text evidence="1">Belongs to the class-I aminoacyl-tRNA synthetase family.</text>
</comment>
<protein>
    <recommendedName>
        <fullName evidence="1">Arginine--tRNA ligase</fullName>
        <ecNumber evidence="1">6.1.1.19</ecNumber>
    </recommendedName>
    <alternativeName>
        <fullName evidence="1">Arginyl-tRNA synthetase</fullName>
        <shortName evidence="1">ArgRS</shortName>
    </alternativeName>
</protein>
<proteinExistence type="inferred from homology"/>
<gene>
    <name evidence="1" type="primary">argS</name>
    <name type="ordered locus">Saci_1396</name>
</gene>
<name>SYR_SULAC</name>
<evidence type="ECO:0000255" key="1">
    <source>
        <dbReference type="HAMAP-Rule" id="MF_00123"/>
    </source>
</evidence>
<dbReference type="EC" id="6.1.1.19" evidence="1"/>
<dbReference type="EMBL" id="CP000077">
    <property type="protein sequence ID" value="AAY80726.1"/>
    <property type="molecule type" value="Genomic_DNA"/>
</dbReference>
<dbReference type="RefSeq" id="WP_011278228.1">
    <property type="nucleotide sequence ID" value="NC_007181.1"/>
</dbReference>
<dbReference type="SMR" id="Q4J904"/>
<dbReference type="STRING" id="330779.Saci_1396"/>
<dbReference type="GeneID" id="14551895"/>
<dbReference type="KEGG" id="sai:Saci_1396"/>
<dbReference type="PATRIC" id="fig|330779.12.peg.1345"/>
<dbReference type="eggNOG" id="arCOG00487">
    <property type="taxonomic scope" value="Archaea"/>
</dbReference>
<dbReference type="HOGENOM" id="CLU_006406_6_1_2"/>
<dbReference type="Proteomes" id="UP000001018">
    <property type="component" value="Chromosome"/>
</dbReference>
<dbReference type="GO" id="GO:0005737">
    <property type="term" value="C:cytoplasm"/>
    <property type="evidence" value="ECO:0007669"/>
    <property type="project" value="UniProtKB-SubCell"/>
</dbReference>
<dbReference type="GO" id="GO:0004814">
    <property type="term" value="F:arginine-tRNA ligase activity"/>
    <property type="evidence" value="ECO:0007669"/>
    <property type="project" value="UniProtKB-UniRule"/>
</dbReference>
<dbReference type="GO" id="GO:0005524">
    <property type="term" value="F:ATP binding"/>
    <property type="evidence" value="ECO:0007669"/>
    <property type="project" value="UniProtKB-UniRule"/>
</dbReference>
<dbReference type="GO" id="GO:0006420">
    <property type="term" value="P:arginyl-tRNA aminoacylation"/>
    <property type="evidence" value="ECO:0007669"/>
    <property type="project" value="UniProtKB-UniRule"/>
</dbReference>
<dbReference type="Gene3D" id="3.30.1360.70">
    <property type="entry name" value="Arginyl tRNA synthetase N-terminal domain"/>
    <property type="match status" value="1"/>
</dbReference>
<dbReference type="Gene3D" id="3.40.50.620">
    <property type="entry name" value="HUPs"/>
    <property type="match status" value="1"/>
</dbReference>
<dbReference type="Gene3D" id="1.10.730.10">
    <property type="entry name" value="Isoleucyl-tRNA Synthetase, Domain 1"/>
    <property type="match status" value="1"/>
</dbReference>
<dbReference type="HAMAP" id="MF_00123">
    <property type="entry name" value="Arg_tRNA_synth"/>
    <property type="match status" value="1"/>
</dbReference>
<dbReference type="InterPro" id="IPR001278">
    <property type="entry name" value="Arg-tRNA-ligase"/>
</dbReference>
<dbReference type="InterPro" id="IPR036695">
    <property type="entry name" value="Arg-tRNA-synth_N_sf"/>
</dbReference>
<dbReference type="InterPro" id="IPR035684">
    <property type="entry name" value="ArgRS_core"/>
</dbReference>
<dbReference type="InterPro" id="IPR008909">
    <property type="entry name" value="DALR_anticod-bd"/>
</dbReference>
<dbReference type="InterPro" id="IPR014729">
    <property type="entry name" value="Rossmann-like_a/b/a_fold"/>
</dbReference>
<dbReference type="InterPro" id="IPR009080">
    <property type="entry name" value="tRNAsynth_Ia_anticodon-bd"/>
</dbReference>
<dbReference type="NCBIfam" id="TIGR00456">
    <property type="entry name" value="argS"/>
    <property type="match status" value="1"/>
</dbReference>
<dbReference type="NCBIfam" id="NF002446">
    <property type="entry name" value="PRK01611.3-3"/>
    <property type="match status" value="1"/>
</dbReference>
<dbReference type="PANTHER" id="PTHR11956:SF5">
    <property type="entry name" value="ARGININE--TRNA LIGASE, CYTOPLASMIC"/>
    <property type="match status" value="1"/>
</dbReference>
<dbReference type="PANTHER" id="PTHR11956">
    <property type="entry name" value="ARGINYL-TRNA SYNTHETASE"/>
    <property type="match status" value="1"/>
</dbReference>
<dbReference type="Pfam" id="PF05746">
    <property type="entry name" value="DALR_1"/>
    <property type="match status" value="1"/>
</dbReference>
<dbReference type="Pfam" id="PF00750">
    <property type="entry name" value="tRNA-synt_1d"/>
    <property type="match status" value="2"/>
</dbReference>
<dbReference type="PRINTS" id="PR01038">
    <property type="entry name" value="TRNASYNTHARG"/>
</dbReference>
<dbReference type="SMART" id="SM00836">
    <property type="entry name" value="DALR_1"/>
    <property type="match status" value="1"/>
</dbReference>
<dbReference type="SUPFAM" id="SSF47323">
    <property type="entry name" value="Anticodon-binding domain of a subclass of class I aminoacyl-tRNA synthetases"/>
    <property type="match status" value="1"/>
</dbReference>
<dbReference type="SUPFAM" id="SSF55190">
    <property type="entry name" value="Arginyl-tRNA synthetase (ArgRS), N-terminal 'additional' domain"/>
    <property type="match status" value="1"/>
</dbReference>
<dbReference type="SUPFAM" id="SSF52374">
    <property type="entry name" value="Nucleotidylyl transferase"/>
    <property type="match status" value="1"/>
</dbReference>